<reference key="1">
    <citation type="journal article" date="2010" name="J. Bacteriol.">
        <title>The genome sequence of the biocontrol agent Pantoea vagans strain C9-1.</title>
        <authorList>
            <person name="Smits T.H."/>
            <person name="Rezzonico F."/>
            <person name="Kamber T."/>
            <person name="Goesmann A."/>
            <person name="Ishimaru C.A."/>
            <person name="Stockwell V.O."/>
            <person name="Frey J.E."/>
            <person name="Duffy B."/>
        </authorList>
    </citation>
    <scope>NUCLEOTIDE SEQUENCE [LARGE SCALE GENOMIC DNA]</scope>
    <source>
        <strain>C9-1</strain>
    </source>
</reference>
<keyword id="KW-1003">Cell membrane</keyword>
<keyword id="KW-0472">Membrane</keyword>
<keyword id="KW-0812">Transmembrane</keyword>
<keyword id="KW-1133">Transmembrane helix</keyword>
<sequence length="67" mass="7741">MSVLPVFVMFGLSFPPVFIELIISLMLFWLVKRVLTPSGIYDLVWHPALFNTALYCCVFYLVSRLLV</sequence>
<feature type="chain" id="PRO_0000414011" description="Protein AaeX">
    <location>
        <begin position="1"/>
        <end position="67"/>
    </location>
</feature>
<feature type="transmembrane region" description="Helical" evidence="1">
    <location>
        <begin position="3"/>
        <end position="23"/>
    </location>
</feature>
<feature type="transmembrane region" description="Helical" evidence="1">
    <location>
        <begin position="43"/>
        <end position="63"/>
    </location>
</feature>
<evidence type="ECO:0000255" key="1">
    <source>
        <dbReference type="HAMAP-Rule" id="MF_01546"/>
    </source>
</evidence>
<proteinExistence type="inferred from homology"/>
<protein>
    <recommendedName>
        <fullName evidence="1">Protein AaeX</fullName>
    </recommendedName>
</protein>
<name>AAEX_PANVC</name>
<organism>
    <name type="scientific">Pantoea vagans (strain C9-1)</name>
    <name type="common">Pantoea agglomerans (strain C9-1)</name>
    <dbReference type="NCBI Taxonomy" id="712898"/>
    <lineage>
        <taxon>Bacteria</taxon>
        <taxon>Pseudomonadati</taxon>
        <taxon>Pseudomonadota</taxon>
        <taxon>Gammaproteobacteria</taxon>
        <taxon>Enterobacterales</taxon>
        <taxon>Erwiniaceae</taxon>
        <taxon>Pantoea</taxon>
    </lineage>
</organism>
<comment type="subcellular location">
    <subcellularLocation>
        <location evidence="1">Cell membrane</location>
        <topology evidence="1">Multi-pass membrane protein</topology>
    </subcellularLocation>
</comment>
<comment type="similarity">
    <text evidence="1">Belongs to the AaeX family.</text>
</comment>
<accession>E1SFM6</accession>
<gene>
    <name evidence="1" type="primary">aaeX</name>
    <name type="ordered locus">Pvag_2816</name>
</gene>
<dbReference type="EMBL" id="CP002206">
    <property type="protein sequence ID" value="ADO10972.1"/>
    <property type="molecule type" value="Genomic_DNA"/>
</dbReference>
<dbReference type="RefSeq" id="WP_003855277.1">
    <property type="nucleotide sequence ID" value="NC_014562.1"/>
</dbReference>
<dbReference type="SMR" id="E1SFM6"/>
<dbReference type="GeneID" id="90519702"/>
<dbReference type="KEGG" id="pva:Pvag_2816"/>
<dbReference type="eggNOG" id="ENOG5032YJX">
    <property type="taxonomic scope" value="Bacteria"/>
</dbReference>
<dbReference type="HOGENOM" id="CLU_188292_0_0_6"/>
<dbReference type="OrthoDB" id="6080293at2"/>
<dbReference type="GO" id="GO:0005886">
    <property type="term" value="C:plasma membrane"/>
    <property type="evidence" value="ECO:0007669"/>
    <property type="project" value="UniProtKB-SubCell"/>
</dbReference>
<dbReference type="HAMAP" id="MF_01546">
    <property type="entry name" value="AaeX"/>
    <property type="match status" value="1"/>
</dbReference>
<dbReference type="InterPro" id="IPR012451">
    <property type="entry name" value="DUF1656"/>
</dbReference>
<dbReference type="NCBIfam" id="NF008615">
    <property type="entry name" value="PRK11594.1"/>
    <property type="match status" value="1"/>
</dbReference>
<dbReference type="Pfam" id="PF07869">
    <property type="entry name" value="DUF1656"/>
    <property type="match status" value="1"/>
</dbReference>